<organism>
    <name type="scientific">Paracidovorax citrulli (strain AAC00-1)</name>
    <name type="common">Acidovorax citrulli</name>
    <dbReference type="NCBI Taxonomy" id="397945"/>
    <lineage>
        <taxon>Bacteria</taxon>
        <taxon>Pseudomonadati</taxon>
        <taxon>Pseudomonadota</taxon>
        <taxon>Betaproteobacteria</taxon>
        <taxon>Burkholderiales</taxon>
        <taxon>Comamonadaceae</taxon>
        <taxon>Paracidovorax</taxon>
    </lineage>
</organism>
<name>IF11_PARC0</name>
<keyword id="KW-0963">Cytoplasm</keyword>
<keyword id="KW-0396">Initiation factor</keyword>
<keyword id="KW-0648">Protein biosynthesis</keyword>
<keyword id="KW-0694">RNA-binding</keyword>
<keyword id="KW-0699">rRNA-binding</keyword>
<comment type="function">
    <text evidence="1">One of the essential components for the initiation of protein synthesis. Stabilizes the binding of IF-2 and IF-3 on the 30S subunit to which N-formylmethionyl-tRNA(fMet) subsequently binds. Helps modulate mRNA selection, yielding the 30S pre-initiation complex (PIC). Upon addition of the 50S ribosomal subunit IF-1, IF-2 and IF-3 are released leaving the mature 70S translation initiation complex.</text>
</comment>
<comment type="subunit">
    <text evidence="1">Component of the 30S ribosomal translation pre-initiation complex which assembles on the 30S ribosome in the order IF-2 and IF-3, IF-1 and N-formylmethionyl-tRNA(fMet); mRNA recruitment can occur at any time during PIC assembly.</text>
</comment>
<comment type="subcellular location">
    <subcellularLocation>
        <location evidence="1">Cytoplasm</location>
    </subcellularLocation>
</comment>
<comment type="similarity">
    <text evidence="1">Belongs to the IF-1 family.</text>
</comment>
<proteinExistence type="inferred from homology"/>
<reference key="1">
    <citation type="submission" date="2006-12" db="EMBL/GenBank/DDBJ databases">
        <title>Complete sequence of Acidovorax avenae subsp. citrulli AAC00-1.</title>
        <authorList>
            <person name="Copeland A."/>
            <person name="Lucas S."/>
            <person name="Lapidus A."/>
            <person name="Barry K."/>
            <person name="Detter J.C."/>
            <person name="Glavina del Rio T."/>
            <person name="Dalin E."/>
            <person name="Tice H."/>
            <person name="Pitluck S."/>
            <person name="Kiss H."/>
            <person name="Brettin T."/>
            <person name="Bruce D."/>
            <person name="Han C."/>
            <person name="Tapia R."/>
            <person name="Gilna P."/>
            <person name="Schmutz J."/>
            <person name="Larimer F."/>
            <person name="Land M."/>
            <person name="Hauser L."/>
            <person name="Kyrpides N."/>
            <person name="Kim E."/>
            <person name="Stahl D."/>
            <person name="Richardson P."/>
        </authorList>
    </citation>
    <scope>NUCLEOTIDE SEQUENCE [LARGE SCALE GENOMIC DNA]</scope>
    <source>
        <strain>AAC00-1</strain>
    </source>
</reference>
<feature type="chain" id="PRO_0000338745" description="Translation initiation factor IF-1 1">
    <location>
        <begin position="1"/>
        <end position="85"/>
    </location>
</feature>
<feature type="domain" description="S1-like" evidence="1">
    <location>
        <begin position="1"/>
        <end position="72"/>
    </location>
</feature>
<evidence type="ECO:0000255" key="1">
    <source>
        <dbReference type="HAMAP-Rule" id="MF_00075"/>
    </source>
</evidence>
<protein>
    <recommendedName>
        <fullName evidence="1">Translation initiation factor IF-1 1</fullName>
    </recommendedName>
</protein>
<gene>
    <name evidence="1" type="primary">infA1</name>
    <name type="ordered locus">Aave_1086</name>
</gene>
<accession>A1TL44</accession>
<sequence>MSKEDLIEMQGKVEEVLPDSRFRVTLDNGHQLIAYAGGKMRKHRIRVLAGDRVSLELSPYDLNKGRLTFRHIEGRGPRAPQRGAR</sequence>
<dbReference type="EMBL" id="CP000512">
    <property type="protein sequence ID" value="ABM31682.1"/>
    <property type="molecule type" value="Genomic_DNA"/>
</dbReference>
<dbReference type="RefSeq" id="WP_011794238.1">
    <property type="nucleotide sequence ID" value="NC_008752.1"/>
</dbReference>
<dbReference type="SMR" id="A1TL44"/>
<dbReference type="STRING" id="397945.Aave_1086"/>
<dbReference type="GeneID" id="79790740"/>
<dbReference type="KEGG" id="aav:Aave_1086"/>
<dbReference type="eggNOG" id="COG0361">
    <property type="taxonomic scope" value="Bacteria"/>
</dbReference>
<dbReference type="HOGENOM" id="CLU_151267_4_1_4"/>
<dbReference type="OrthoDB" id="9803250at2"/>
<dbReference type="Proteomes" id="UP000002596">
    <property type="component" value="Chromosome"/>
</dbReference>
<dbReference type="GO" id="GO:0005829">
    <property type="term" value="C:cytosol"/>
    <property type="evidence" value="ECO:0007669"/>
    <property type="project" value="TreeGrafter"/>
</dbReference>
<dbReference type="GO" id="GO:0043022">
    <property type="term" value="F:ribosome binding"/>
    <property type="evidence" value="ECO:0007669"/>
    <property type="project" value="UniProtKB-UniRule"/>
</dbReference>
<dbReference type="GO" id="GO:0019843">
    <property type="term" value="F:rRNA binding"/>
    <property type="evidence" value="ECO:0007669"/>
    <property type="project" value="UniProtKB-UniRule"/>
</dbReference>
<dbReference type="GO" id="GO:0003743">
    <property type="term" value="F:translation initiation factor activity"/>
    <property type="evidence" value="ECO:0007669"/>
    <property type="project" value="UniProtKB-UniRule"/>
</dbReference>
<dbReference type="CDD" id="cd04451">
    <property type="entry name" value="S1_IF1"/>
    <property type="match status" value="1"/>
</dbReference>
<dbReference type="FunFam" id="2.40.50.140:FF:000002">
    <property type="entry name" value="Translation initiation factor IF-1"/>
    <property type="match status" value="1"/>
</dbReference>
<dbReference type="Gene3D" id="2.40.50.140">
    <property type="entry name" value="Nucleic acid-binding proteins"/>
    <property type="match status" value="1"/>
</dbReference>
<dbReference type="HAMAP" id="MF_00075">
    <property type="entry name" value="IF_1"/>
    <property type="match status" value="1"/>
</dbReference>
<dbReference type="InterPro" id="IPR012340">
    <property type="entry name" value="NA-bd_OB-fold"/>
</dbReference>
<dbReference type="InterPro" id="IPR006196">
    <property type="entry name" value="RNA-binding_domain_S1_IF1"/>
</dbReference>
<dbReference type="InterPro" id="IPR004368">
    <property type="entry name" value="TIF_IF1"/>
</dbReference>
<dbReference type="NCBIfam" id="TIGR00008">
    <property type="entry name" value="infA"/>
    <property type="match status" value="1"/>
</dbReference>
<dbReference type="PANTHER" id="PTHR33370">
    <property type="entry name" value="TRANSLATION INITIATION FACTOR IF-1, CHLOROPLASTIC"/>
    <property type="match status" value="1"/>
</dbReference>
<dbReference type="PANTHER" id="PTHR33370:SF1">
    <property type="entry name" value="TRANSLATION INITIATION FACTOR IF-1, CHLOROPLASTIC"/>
    <property type="match status" value="1"/>
</dbReference>
<dbReference type="Pfam" id="PF01176">
    <property type="entry name" value="eIF-1a"/>
    <property type="match status" value="1"/>
</dbReference>
<dbReference type="SUPFAM" id="SSF50249">
    <property type="entry name" value="Nucleic acid-binding proteins"/>
    <property type="match status" value="1"/>
</dbReference>
<dbReference type="PROSITE" id="PS50832">
    <property type="entry name" value="S1_IF1_TYPE"/>
    <property type="match status" value="1"/>
</dbReference>